<reference key="1">
    <citation type="journal article" date="1999" name="Science">
        <title>Genome sequence of the radioresistant bacterium Deinococcus radiodurans R1.</title>
        <authorList>
            <person name="White O."/>
            <person name="Eisen J.A."/>
            <person name="Heidelberg J.F."/>
            <person name="Hickey E.K."/>
            <person name="Peterson J.D."/>
            <person name="Dodson R.J."/>
            <person name="Haft D.H."/>
            <person name="Gwinn M.L."/>
            <person name="Nelson W.C."/>
            <person name="Richardson D.L."/>
            <person name="Moffat K.S."/>
            <person name="Qin H."/>
            <person name="Jiang L."/>
            <person name="Pamphile W."/>
            <person name="Crosby M."/>
            <person name="Shen M."/>
            <person name="Vamathevan J.J."/>
            <person name="Lam P."/>
            <person name="McDonald L.A."/>
            <person name="Utterback T.R."/>
            <person name="Zalewski C."/>
            <person name="Makarova K.S."/>
            <person name="Aravind L."/>
            <person name="Daly M.J."/>
            <person name="Minton K.W."/>
            <person name="Fleischmann R.D."/>
            <person name="Ketchum K.A."/>
            <person name="Nelson K.E."/>
            <person name="Salzberg S.L."/>
            <person name="Smith H.O."/>
            <person name="Venter J.C."/>
            <person name="Fraser C.M."/>
        </authorList>
    </citation>
    <scope>NUCLEOTIDE SEQUENCE [LARGE SCALE GENOMIC DNA]</scope>
    <source>
        <strain>ATCC 13939 / DSM 20539 / JCM 16871 / CCUG 27074 / LMG 4051 / NBRC 15346 / NCIMB 9279 / VKM B-1422 / R1</strain>
    </source>
</reference>
<feature type="chain" id="PRO_0000134986" description="Uncharacterized carotenoid cyclase DR_0801">
    <location>
        <begin position="1"/>
        <end position="410"/>
    </location>
</feature>
<feature type="binding site" evidence="1">
    <location>
        <begin position="11"/>
        <end position="39"/>
    </location>
    <ligand>
        <name>NAD(+)</name>
        <dbReference type="ChEBI" id="CHEBI:57540"/>
    </ligand>
</feature>
<evidence type="ECO:0000255" key="1"/>
<evidence type="ECO:0000305" key="2"/>
<name>Y801_DEIRA</name>
<gene>
    <name type="ordered locus">DR_0801</name>
</gene>
<accession>Q9RW68</accession>
<organism>
    <name type="scientific">Deinococcus radiodurans (strain ATCC 13939 / DSM 20539 / JCM 16871 / CCUG 27074 / LMG 4051 / NBRC 15346 / NCIMB 9279 / VKM B-1422 / R1)</name>
    <dbReference type="NCBI Taxonomy" id="243230"/>
    <lineage>
        <taxon>Bacteria</taxon>
        <taxon>Thermotogati</taxon>
        <taxon>Deinococcota</taxon>
        <taxon>Deinococci</taxon>
        <taxon>Deinococcales</taxon>
        <taxon>Deinococcaceae</taxon>
        <taxon>Deinococcus</taxon>
    </lineage>
</organism>
<dbReference type="EMBL" id="AE000513">
    <property type="protein sequence ID" value="AAF10377.1"/>
    <property type="molecule type" value="Genomic_DNA"/>
</dbReference>
<dbReference type="PIR" id="D75475">
    <property type="entry name" value="D75475"/>
</dbReference>
<dbReference type="RefSeq" id="NP_294525.1">
    <property type="nucleotide sequence ID" value="NC_001263.1"/>
</dbReference>
<dbReference type="RefSeq" id="WP_010887447.1">
    <property type="nucleotide sequence ID" value="NC_001263.1"/>
</dbReference>
<dbReference type="SMR" id="Q9RW68"/>
<dbReference type="STRING" id="243230.DR_0801"/>
<dbReference type="PaxDb" id="243230-DR_0801"/>
<dbReference type="EnsemblBacteria" id="AAF10377">
    <property type="protein sequence ID" value="AAF10377"/>
    <property type="gene ID" value="DR_0801"/>
</dbReference>
<dbReference type="GeneID" id="69517046"/>
<dbReference type="KEGG" id="dra:DR_0801"/>
<dbReference type="PATRIC" id="fig|243230.17.peg.981"/>
<dbReference type="eggNOG" id="COG0654">
    <property type="taxonomic scope" value="Bacteria"/>
</dbReference>
<dbReference type="HOGENOM" id="CLU_032956_1_1_0"/>
<dbReference type="InParanoid" id="Q9RW68"/>
<dbReference type="OrthoDB" id="537501at2"/>
<dbReference type="Proteomes" id="UP000002524">
    <property type="component" value="Chromosome 1"/>
</dbReference>
<dbReference type="GO" id="GO:0016860">
    <property type="term" value="F:intramolecular oxidoreductase activity"/>
    <property type="evidence" value="ECO:0007669"/>
    <property type="project" value="UniProtKB-ARBA"/>
</dbReference>
<dbReference type="GO" id="GO:0016705">
    <property type="term" value="F:oxidoreductase activity, acting on paired donors, with incorporation or reduction of molecular oxygen"/>
    <property type="evidence" value="ECO:0007669"/>
    <property type="project" value="InterPro"/>
</dbReference>
<dbReference type="GO" id="GO:0016117">
    <property type="term" value="P:carotenoid biosynthetic process"/>
    <property type="evidence" value="ECO:0007669"/>
    <property type="project" value="UniProtKB-KW"/>
</dbReference>
<dbReference type="Gene3D" id="3.50.50.60">
    <property type="entry name" value="FAD/NAD(P)-binding domain"/>
    <property type="match status" value="2"/>
</dbReference>
<dbReference type="InterPro" id="IPR036188">
    <property type="entry name" value="FAD/NAD-bd_sf"/>
</dbReference>
<dbReference type="InterPro" id="IPR010108">
    <property type="entry name" value="Lycopene_cyclase_b/e"/>
</dbReference>
<dbReference type="NCBIfam" id="TIGR01790">
    <property type="entry name" value="carotene-cycl"/>
    <property type="match status" value="1"/>
</dbReference>
<dbReference type="PANTHER" id="PTHR39757">
    <property type="match status" value="1"/>
</dbReference>
<dbReference type="PANTHER" id="PTHR39757:SF5">
    <property type="entry name" value="OS02G0190600 PROTEIN"/>
    <property type="match status" value="1"/>
</dbReference>
<dbReference type="Pfam" id="PF05834">
    <property type="entry name" value="Lycopene_cycl"/>
    <property type="match status" value="1"/>
</dbReference>
<dbReference type="PRINTS" id="PR00420">
    <property type="entry name" value="RNGMNOXGNASE"/>
</dbReference>
<dbReference type="SUPFAM" id="SSF51905">
    <property type="entry name" value="FAD/NAD(P)-binding domain"/>
    <property type="match status" value="1"/>
</dbReference>
<protein>
    <recommendedName>
        <fullName>Uncharacterized carotenoid cyclase DR_0801</fullName>
    </recommendedName>
</protein>
<keyword id="KW-0125">Carotenoid biosynthesis</keyword>
<keyword id="KW-0520">NAD</keyword>
<keyword id="KW-0560">Oxidoreductase</keyword>
<keyword id="KW-1185">Reference proteome</keyword>
<comment type="similarity">
    <text evidence="2">Belongs to the lycopene cyclase family.</text>
</comment>
<sequence length="410" mass="43161">MAPFSPASSDVLVIGGGPSGTALSAELAARGLDVQQLAPHPPRPFPATYGAWLGDLPTWARGCAEQVWTDVRAYTGPQPTSLGQPYALLDNAALLRTLRGLADWTWVEGAALHAERSGAGWTVYGAGGERWQTRLVVDASGHGALVSPVRFPGGAALQTAYGVVARFRRPPVTPGSMVWMDYRTPAPELKRGEATFLYAMHLGGDRYFVEETSLIARPAPTRAELRRRLLARLSAQGTPPHATESEEWVAFPMNAQAPAPGGVLAYGAAAGRVHPVSGFQVAGALSDAPGVATAIATALCQGKDAAAAGWAALWSPERRAAREVHLLGVGALLGLERAELPHFFGTFFGLPREQWARFLHPDTDAGTLARTMLRVFAQTGGRVRLPLARAALAQPAASGRALAAAAGLKI</sequence>
<proteinExistence type="inferred from homology"/>